<protein>
    <recommendedName>
        <fullName>PRKR-interacting protein 1 homolog</fullName>
    </recommendedName>
</protein>
<gene>
    <name type="primary">prkrip1</name>
    <name type="ORF">TNeu032k09.1</name>
</gene>
<proteinExistence type="evidence at transcript level"/>
<reference key="1">
    <citation type="submission" date="2006-10" db="EMBL/GenBank/DDBJ databases">
        <authorList>
            <consortium name="Sanger Xenopus tropicalis EST/cDNA project"/>
        </authorList>
    </citation>
    <scope>NUCLEOTIDE SEQUENCE [LARGE SCALE MRNA]</scope>
    <source>
        <tissue>Neurula</tissue>
    </source>
</reference>
<reference key="2">
    <citation type="submission" date="2008-02" db="EMBL/GenBank/DDBJ databases">
        <authorList>
            <consortium name="NIH - Xenopus Gene Collection (XGC) project"/>
        </authorList>
    </citation>
    <scope>NUCLEOTIDE SEQUENCE [LARGE SCALE MRNA]</scope>
</reference>
<organism>
    <name type="scientific">Xenopus tropicalis</name>
    <name type="common">Western clawed frog</name>
    <name type="synonym">Silurana tropicalis</name>
    <dbReference type="NCBI Taxonomy" id="8364"/>
    <lineage>
        <taxon>Eukaryota</taxon>
        <taxon>Metazoa</taxon>
        <taxon>Chordata</taxon>
        <taxon>Craniata</taxon>
        <taxon>Vertebrata</taxon>
        <taxon>Euteleostomi</taxon>
        <taxon>Amphibia</taxon>
        <taxon>Batrachia</taxon>
        <taxon>Anura</taxon>
        <taxon>Pipoidea</taxon>
        <taxon>Pipidae</taxon>
        <taxon>Xenopodinae</taxon>
        <taxon>Xenopus</taxon>
        <taxon>Silurana</taxon>
    </lineage>
</organism>
<name>PKRI1_XENTR</name>
<accession>Q28IN9</accession>
<keyword id="KW-0175">Coiled coil</keyword>
<keyword id="KW-0507">mRNA processing</keyword>
<keyword id="KW-0508">mRNA splicing</keyword>
<keyword id="KW-0539">Nucleus</keyword>
<keyword id="KW-1185">Reference proteome</keyword>
<keyword id="KW-0747">Spliceosome</keyword>
<dbReference type="EMBL" id="CR760297">
    <property type="protein sequence ID" value="CAJ82854.1"/>
    <property type="molecule type" value="mRNA"/>
</dbReference>
<dbReference type="EMBL" id="BC159011">
    <property type="protein sequence ID" value="AAI59012.1"/>
    <property type="molecule type" value="mRNA"/>
</dbReference>
<dbReference type="RefSeq" id="NP_001017225.1">
    <property type="nucleotide sequence ID" value="NM_001017225.2"/>
</dbReference>
<dbReference type="RefSeq" id="XP_012812502.1">
    <property type="nucleotide sequence ID" value="XM_012957048.3"/>
</dbReference>
<dbReference type="RefSeq" id="XP_017946768.1">
    <property type="nucleotide sequence ID" value="XM_018091279.2"/>
</dbReference>
<dbReference type="SMR" id="Q28IN9"/>
<dbReference type="FunCoup" id="Q28IN9">
    <property type="interactions" value="2394"/>
</dbReference>
<dbReference type="STRING" id="8364.ENSXETP00000054571"/>
<dbReference type="GeneID" id="549979"/>
<dbReference type="KEGG" id="xtr:549979"/>
<dbReference type="AGR" id="Xenbase:XB-GENE-986508"/>
<dbReference type="CTD" id="79706"/>
<dbReference type="Xenbase" id="XB-GENE-986508">
    <property type="gene designation" value="prkrip1"/>
</dbReference>
<dbReference type="InParanoid" id="Q28IN9"/>
<dbReference type="OMA" id="ETPSFIM"/>
<dbReference type="OrthoDB" id="10067079at2759"/>
<dbReference type="PhylomeDB" id="Q28IN9"/>
<dbReference type="Proteomes" id="UP000008143">
    <property type="component" value="Chromosome 2"/>
</dbReference>
<dbReference type="Bgee" id="ENSXETG00000024610">
    <property type="expression patterns" value="Expressed in 2-cell stage embryo and 12 other cell types or tissues"/>
</dbReference>
<dbReference type="GO" id="GO:0005730">
    <property type="term" value="C:nucleolus"/>
    <property type="evidence" value="ECO:0007669"/>
    <property type="project" value="UniProtKB-SubCell"/>
</dbReference>
<dbReference type="GO" id="GO:0005681">
    <property type="term" value="C:spliceosomal complex"/>
    <property type="evidence" value="ECO:0007669"/>
    <property type="project" value="UniProtKB-KW"/>
</dbReference>
<dbReference type="GO" id="GO:0003725">
    <property type="term" value="F:double-stranded RNA binding"/>
    <property type="evidence" value="ECO:0007669"/>
    <property type="project" value="InterPro"/>
</dbReference>
<dbReference type="GO" id="GO:0006397">
    <property type="term" value="P:mRNA processing"/>
    <property type="evidence" value="ECO:0007669"/>
    <property type="project" value="UniProtKB-KW"/>
</dbReference>
<dbReference type="GO" id="GO:0008380">
    <property type="term" value="P:RNA splicing"/>
    <property type="evidence" value="ECO:0007669"/>
    <property type="project" value="UniProtKB-KW"/>
</dbReference>
<dbReference type="InterPro" id="IPR009548">
    <property type="entry name" value="Prkrip1"/>
</dbReference>
<dbReference type="PANTHER" id="PTHR13507">
    <property type="entry name" value="PRKR-INTERACTING PROTEIN 1"/>
    <property type="match status" value="1"/>
</dbReference>
<dbReference type="PANTHER" id="PTHR13507:SF0">
    <property type="entry name" value="PRKR-INTERACTING PROTEIN 1"/>
    <property type="match status" value="1"/>
</dbReference>
<dbReference type="Pfam" id="PF06658">
    <property type="entry name" value="DUF1168"/>
    <property type="match status" value="1"/>
</dbReference>
<evidence type="ECO:0000250" key="1"/>
<evidence type="ECO:0000250" key="2">
    <source>
        <dbReference type="UniProtKB" id="Q9CWV6"/>
    </source>
</evidence>
<evidence type="ECO:0000250" key="3">
    <source>
        <dbReference type="UniProtKB" id="Q9H875"/>
    </source>
</evidence>
<evidence type="ECO:0000255" key="4"/>
<evidence type="ECO:0000256" key="5">
    <source>
        <dbReference type="SAM" id="MobiDB-lite"/>
    </source>
</evidence>
<evidence type="ECO:0000305" key="6"/>
<comment type="function">
    <text evidence="2 3">Required for pre-mRNA splicing as component of the spliceosome (By similarity). Binds double-stranded RNA (By similarity).</text>
</comment>
<comment type="subunit">
    <text evidence="3">Component of the pre-catalytic and post-catalytic spliceosome complexes.</text>
</comment>
<comment type="subcellular location">
    <subcellularLocation>
        <location evidence="3">Nucleus</location>
    </subcellularLocation>
    <subcellularLocation>
        <location evidence="2">Nucleus</location>
        <location evidence="2">Nucleolus</location>
    </subcellularLocation>
</comment>
<comment type="similarity">
    <text evidence="6">Belongs to the PRKRIP1 family.</text>
</comment>
<feature type="chain" id="PRO_0000324793" description="PRKR-interacting protein 1 homolog">
    <location>
        <begin position="1"/>
        <end position="173"/>
    </location>
</feature>
<feature type="region of interest" description="Disordered" evidence="5">
    <location>
        <begin position="1"/>
        <end position="27"/>
    </location>
</feature>
<feature type="region of interest" description="Required for RNA-binding" evidence="1">
    <location>
        <begin position="50"/>
        <end position="142"/>
    </location>
</feature>
<feature type="region of interest" description="Disordered" evidence="5">
    <location>
        <begin position="115"/>
        <end position="173"/>
    </location>
</feature>
<feature type="region of interest" description="Required for nuclear localization" evidence="1">
    <location>
        <begin position="125"/>
        <end position="137"/>
    </location>
</feature>
<feature type="coiled-coil region" evidence="4">
    <location>
        <begin position="99"/>
        <end position="161"/>
    </location>
</feature>
<feature type="compositionally biased region" description="Basic residues" evidence="5">
    <location>
        <begin position="124"/>
        <end position="142"/>
    </location>
</feature>
<feature type="compositionally biased region" description="Basic and acidic residues" evidence="5">
    <location>
        <begin position="143"/>
        <end position="173"/>
    </location>
</feature>
<sequence length="173" mass="20348">MAAETGTAKPARAKKEPQPLVIPKNATDEQRLRLERLMRNPDKLAAIPERPKEWSPRSAPEFVRDVMGSSAGAGSGEFHVYRHLRRREYQRQEFLDRVSEKHNLDDDFQRKLMENKKLEEEKTAKRRLKRQKLKEKKKMAKMAKKEEKKEEIEKHVELDNSPESSDKSDLEDQ</sequence>